<proteinExistence type="inferred from homology"/>
<gene>
    <name type="primary">rmuC</name>
    <name type="ordered locus">CT_825</name>
</gene>
<accession>O84832</accession>
<comment type="function">
    <text evidence="1">Involved in DNA recombination.</text>
</comment>
<comment type="similarity">
    <text evidence="3">Belongs to the RmuC family.</text>
</comment>
<evidence type="ECO:0000250" key="1"/>
<evidence type="ECO:0000255" key="2"/>
<evidence type="ECO:0000305" key="3"/>
<organism>
    <name type="scientific">Chlamydia trachomatis serovar D (strain ATCC VR-885 / DSM 19411 / UW-3/Cx)</name>
    <dbReference type="NCBI Taxonomy" id="272561"/>
    <lineage>
        <taxon>Bacteria</taxon>
        <taxon>Pseudomonadati</taxon>
        <taxon>Chlamydiota</taxon>
        <taxon>Chlamydiia</taxon>
        <taxon>Chlamydiales</taxon>
        <taxon>Chlamydiaceae</taxon>
        <taxon>Chlamydia/Chlamydophila group</taxon>
        <taxon>Chlamydia</taxon>
    </lineage>
</organism>
<feature type="chain" id="PRO_0000202043" description="DNA recombination protein RmuC homolog">
    <location>
        <begin position="1"/>
        <end position="427"/>
    </location>
</feature>
<feature type="coiled-coil region" evidence="2">
    <location>
        <begin position="112"/>
        <end position="162"/>
    </location>
</feature>
<dbReference type="EMBL" id="AE001273">
    <property type="protein sequence ID" value="AAC68422.1"/>
    <property type="molecule type" value="Genomic_DNA"/>
</dbReference>
<dbReference type="PIR" id="B71466">
    <property type="entry name" value="B71466"/>
</dbReference>
<dbReference type="RefSeq" id="NP_220346.1">
    <property type="nucleotide sequence ID" value="NC_000117.1"/>
</dbReference>
<dbReference type="RefSeq" id="WP_009872211.1">
    <property type="nucleotide sequence ID" value="NC_000117.1"/>
</dbReference>
<dbReference type="SMR" id="O84832"/>
<dbReference type="EnsemblBacteria" id="AAC68422">
    <property type="protein sequence ID" value="AAC68422"/>
    <property type="gene ID" value="CT_825"/>
</dbReference>
<dbReference type="GeneID" id="884660"/>
<dbReference type="KEGG" id="ctr:CT_825"/>
<dbReference type="PATRIC" id="fig|272561.5.peg.911"/>
<dbReference type="HOGENOM" id="CLU_024057_1_1_0"/>
<dbReference type="InParanoid" id="O84832"/>
<dbReference type="OrthoDB" id="370725at2"/>
<dbReference type="Proteomes" id="UP000000431">
    <property type="component" value="Chromosome"/>
</dbReference>
<dbReference type="GO" id="GO:0006310">
    <property type="term" value="P:DNA recombination"/>
    <property type="evidence" value="ECO:0000318"/>
    <property type="project" value="GO_Central"/>
</dbReference>
<dbReference type="InterPro" id="IPR003798">
    <property type="entry name" value="DNA_recombination_RmuC"/>
</dbReference>
<dbReference type="PANTHER" id="PTHR30563">
    <property type="entry name" value="DNA RECOMBINATION PROTEIN RMUC"/>
    <property type="match status" value="1"/>
</dbReference>
<dbReference type="PANTHER" id="PTHR30563:SF0">
    <property type="entry name" value="DNA RECOMBINATION PROTEIN RMUC"/>
    <property type="match status" value="1"/>
</dbReference>
<dbReference type="Pfam" id="PF02646">
    <property type="entry name" value="RmuC"/>
    <property type="match status" value="1"/>
</dbReference>
<reference key="1">
    <citation type="journal article" date="1998" name="Science">
        <title>Genome sequence of an obligate intracellular pathogen of humans: Chlamydia trachomatis.</title>
        <authorList>
            <person name="Stephens R.S."/>
            <person name="Kalman S."/>
            <person name="Lammel C.J."/>
            <person name="Fan J."/>
            <person name="Marathe R."/>
            <person name="Aravind L."/>
            <person name="Mitchell W.P."/>
            <person name="Olinger L."/>
            <person name="Tatusov R.L."/>
            <person name="Zhao Q."/>
            <person name="Koonin E.V."/>
            <person name="Davis R.W."/>
        </authorList>
    </citation>
    <scope>NUCLEOTIDE SEQUENCE [LARGE SCALE GENOMIC DNA]</scope>
    <source>
        <strain>ATCC VR-885 / DSM 19411 / UW-3/Cx</strain>
    </source>
</reference>
<sequence>MGVFAISLLSQTVCLYFTFFSLGIALGVLFSFKIFTKKLSRQHEIIRDLEHSKAILQMSLDTRRSQEQLMEEFSHKLTSVSQAFARDMKTESQEFFSEKTQAITSVLAPVHNTLSAFKQNLENFETKQAEDRGALKEQLSQLLTAEQKLERETQALTNILKHPGSRGRWGEIQLERILEISGMLKYCDYSTQTVDSSESSSRADIVIRLPQNRSLVIDAKTPFSEEYLTDNHADPTDLVKKIKDHIKTLKTKSYWDKFEQSPEFVILFLPGESLFNDAIRCAPELMDYAGQSNVILSSPVTLMALLKTVTHVWKQENLQNQIREIGQLGKDLYQRMHKLFDHFHKVGKHLGQAVHSYNDMSSSLSARVLPILRTFDKLELSSSHNKIEALSQVSTLPHSPKVPYPENDLAECLSPEASYLKPPSSNQ</sequence>
<name>RMUC_CHLTR</name>
<keyword id="KW-0175">Coiled coil</keyword>
<keyword id="KW-0233">DNA recombination</keyword>
<keyword id="KW-1185">Reference proteome</keyword>
<protein>
    <recommendedName>
        <fullName>DNA recombination protein RmuC homolog</fullName>
    </recommendedName>
</protein>